<proteinExistence type="inferred from homology"/>
<sequence>MVSNKHDDFSEDDFSDQEDGILLQKKKVVRDAFSKEDSDVEEGISDEEADVAEQPHSEDKEESAEAQLEQNKAEQTNEQQAGVAEPVSEEKRKQSKIDKIIQRKAGQKLKHKTGVVYLSRIPPYMKPAKMRQILSRFGEIDRLFLKREDEAKHKQRTRGGGNKKIMYEEGWAEFIRKRDAKLCAETLNGNIIGGKKGSFYHDDILNVKYLPGFKWADLTEQIARENDVRQAKLELEISQSNKLNAEYIRNVEQSKMLQNMRKRKDHEDRDQDARRQFKQHKVSTNRADAPSSIKNKSETSVKDVLSSLL</sequence>
<comment type="function">
    <text evidence="1">Involved in the small subunit (SSU) processome assembly and function, and in the 18S rRNA synthesis. Required for the early cleavages at sites A0, A1 and A2 (By similarity).</text>
</comment>
<comment type="subcellular location">
    <subcellularLocation>
        <location evidence="1">Nucleus</location>
        <location evidence="1">Nucleolus</location>
    </subcellularLocation>
</comment>
<comment type="similarity">
    <text evidence="3">Belongs to the ESF2/ABP1 family.</text>
</comment>
<keyword id="KW-0539">Nucleus</keyword>
<keyword id="KW-1185">Reference proteome</keyword>
<keyword id="KW-0690">Ribosome biogenesis</keyword>
<keyword id="KW-0694">RNA-binding</keyword>
<keyword id="KW-0698">rRNA processing</keyword>
<evidence type="ECO:0000250" key="1"/>
<evidence type="ECO:0000256" key="2">
    <source>
        <dbReference type="SAM" id="MobiDB-lite"/>
    </source>
</evidence>
<evidence type="ECO:0000305" key="3"/>
<accession>Q6FWS2</accession>
<name>ESF2_CANGA</name>
<organism>
    <name type="scientific">Candida glabrata (strain ATCC 2001 / BCRC 20586 / JCM 3761 / NBRC 0622 / NRRL Y-65 / CBS 138)</name>
    <name type="common">Yeast</name>
    <name type="synonym">Nakaseomyces glabratus</name>
    <dbReference type="NCBI Taxonomy" id="284593"/>
    <lineage>
        <taxon>Eukaryota</taxon>
        <taxon>Fungi</taxon>
        <taxon>Dikarya</taxon>
        <taxon>Ascomycota</taxon>
        <taxon>Saccharomycotina</taxon>
        <taxon>Saccharomycetes</taxon>
        <taxon>Saccharomycetales</taxon>
        <taxon>Saccharomycetaceae</taxon>
        <taxon>Nakaseomyces</taxon>
    </lineage>
</organism>
<gene>
    <name type="primary">ESF2</name>
    <name type="ordered locus">CAGL0C03355g</name>
</gene>
<reference key="1">
    <citation type="journal article" date="2004" name="Nature">
        <title>Genome evolution in yeasts.</title>
        <authorList>
            <person name="Dujon B."/>
            <person name="Sherman D."/>
            <person name="Fischer G."/>
            <person name="Durrens P."/>
            <person name="Casaregola S."/>
            <person name="Lafontaine I."/>
            <person name="de Montigny J."/>
            <person name="Marck C."/>
            <person name="Neuveglise C."/>
            <person name="Talla E."/>
            <person name="Goffard N."/>
            <person name="Frangeul L."/>
            <person name="Aigle M."/>
            <person name="Anthouard V."/>
            <person name="Babour A."/>
            <person name="Barbe V."/>
            <person name="Barnay S."/>
            <person name="Blanchin S."/>
            <person name="Beckerich J.-M."/>
            <person name="Beyne E."/>
            <person name="Bleykasten C."/>
            <person name="Boisrame A."/>
            <person name="Boyer J."/>
            <person name="Cattolico L."/>
            <person name="Confanioleri F."/>
            <person name="de Daruvar A."/>
            <person name="Despons L."/>
            <person name="Fabre E."/>
            <person name="Fairhead C."/>
            <person name="Ferry-Dumazet H."/>
            <person name="Groppi A."/>
            <person name="Hantraye F."/>
            <person name="Hennequin C."/>
            <person name="Jauniaux N."/>
            <person name="Joyet P."/>
            <person name="Kachouri R."/>
            <person name="Kerrest A."/>
            <person name="Koszul R."/>
            <person name="Lemaire M."/>
            <person name="Lesur I."/>
            <person name="Ma L."/>
            <person name="Muller H."/>
            <person name="Nicaud J.-M."/>
            <person name="Nikolski M."/>
            <person name="Oztas S."/>
            <person name="Ozier-Kalogeropoulos O."/>
            <person name="Pellenz S."/>
            <person name="Potier S."/>
            <person name="Richard G.-F."/>
            <person name="Straub M.-L."/>
            <person name="Suleau A."/>
            <person name="Swennen D."/>
            <person name="Tekaia F."/>
            <person name="Wesolowski-Louvel M."/>
            <person name="Westhof E."/>
            <person name="Wirth B."/>
            <person name="Zeniou-Meyer M."/>
            <person name="Zivanovic Y."/>
            <person name="Bolotin-Fukuhara M."/>
            <person name="Thierry A."/>
            <person name="Bouchier C."/>
            <person name="Caudron B."/>
            <person name="Scarpelli C."/>
            <person name="Gaillardin C."/>
            <person name="Weissenbach J."/>
            <person name="Wincker P."/>
            <person name="Souciet J.-L."/>
        </authorList>
    </citation>
    <scope>NUCLEOTIDE SEQUENCE [LARGE SCALE GENOMIC DNA]</scope>
    <source>
        <strain>ATCC 2001 / BCRC 20586 / JCM 3761 / NBRC 0622 / NRRL Y-65 / CBS 138</strain>
    </source>
</reference>
<dbReference type="EMBL" id="CR380949">
    <property type="protein sequence ID" value="CAG58228.1"/>
    <property type="molecule type" value="Genomic_DNA"/>
</dbReference>
<dbReference type="RefSeq" id="XP_445322.1">
    <property type="nucleotide sequence ID" value="XM_445322.1"/>
</dbReference>
<dbReference type="SMR" id="Q6FWS2"/>
<dbReference type="FunCoup" id="Q6FWS2">
    <property type="interactions" value="1022"/>
</dbReference>
<dbReference type="STRING" id="284593.Q6FWS2"/>
<dbReference type="EnsemblFungi" id="CAGL0C03355g-T">
    <property type="protein sequence ID" value="CAGL0C03355g-T-p1"/>
    <property type="gene ID" value="CAGL0C03355g"/>
</dbReference>
<dbReference type="KEGG" id="cgr:2886775"/>
<dbReference type="CGD" id="CAL0127278">
    <property type="gene designation" value="CAGL0C03355g"/>
</dbReference>
<dbReference type="VEuPathDB" id="FungiDB:CAGL0C03355g"/>
<dbReference type="eggNOG" id="KOG3152">
    <property type="taxonomic scope" value="Eukaryota"/>
</dbReference>
<dbReference type="HOGENOM" id="CLU_054086_0_0_1"/>
<dbReference type="InParanoid" id="Q6FWS2"/>
<dbReference type="OMA" id="FEWSEVG"/>
<dbReference type="Proteomes" id="UP000002428">
    <property type="component" value="Chromosome C"/>
</dbReference>
<dbReference type="GO" id="GO:0005730">
    <property type="term" value="C:nucleolus"/>
    <property type="evidence" value="ECO:0007669"/>
    <property type="project" value="UniProtKB-SubCell"/>
</dbReference>
<dbReference type="GO" id="GO:0032040">
    <property type="term" value="C:small-subunit processome"/>
    <property type="evidence" value="ECO:0007669"/>
    <property type="project" value="EnsemblFungi"/>
</dbReference>
<dbReference type="GO" id="GO:0001671">
    <property type="term" value="F:ATPase activator activity"/>
    <property type="evidence" value="ECO:0007669"/>
    <property type="project" value="EnsemblFungi"/>
</dbReference>
<dbReference type="GO" id="GO:0003723">
    <property type="term" value="F:RNA binding"/>
    <property type="evidence" value="ECO:0007669"/>
    <property type="project" value="UniProtKB-KW"/>
</dbReference>
<dbReference type="GO" id="GO:0000480">
    <property type="term" value="P:endonucleolytic cleavage in 5'-ETS of tricistronic rRNA transcript (SSU-rRNA, 5.8S rRNA, LSU-rRNA)"/>
    <property type="evidence" value="ECO:0007669"/>
    <property type="project" value="EnsemblFungi"/>
</dbReference>
<dbReference type="GO" id="GO:0000447">
    <property type="term" value="P:endonucleolytic cleavage in ITS1 to separate SSU-rRNA from 5.8S rRNA and LSU-rRNA from tricistronic rRNA transcript (SSU-rRNA, 5.8S rRNA, LSU-rRNA)"/>
    <property type="evidence" value="ECO:0007669"/>
    <property type="project" value="EnsemblFungi"/>
</dbReference>
<dbReference type="GO" id="GO:0000472">
    <property type="term" value="P:endonucleolytic cleavage to generate mature 5'-end of SSU-rRNA from (SSU-rRNA, 5.8S rRNA, LSU-rRNA)"/>
    <property type="evidence" value="ECO:0007669"/>
    <property type="project" value="EnsemblFungi"/>
</dbReference>
<dbReference type="GO" id="GO:0034462">
    <property type="term" value="P:small-subunit processome assembly"/>
    <property type="evidence" value="ECO:0007669"/>
    <property type="project" value="EnsemblFungi"/>
</dbReference>
<dbReference type="CDD" id="cd12263">
    <property type="entry name" value="RRM_ABT1_like"/>
    <property type="match status" value="1"/>
</dbReference>
<dbReference type="Gene3D" id="3.30.70.330">
    <property type="match status" value="1"/>
</dbReference>
<dbReference type="InterPro" id="IPR039119">
    <property type="entry name" value="ABT1/Esf2"/>
</dbReference>
<dbReference type="InterPro" id="IPR034353">
    <property type="entry name" value="ABT1/ESF2_RRM"/>
</dbReference>
<dbReference type="InterPro" id="IPR012677">
    <property type="entry name" value="Nucleotide-bd_a/b_plait_sf"/>
</dbReference>
<dbReference type="InterPro" id="IPR035979">
    <property type="entry name" value="RBD_domain_sf"/>
</dbReference>
<dbReference type="PANTHER" id="PTHR12311">
    <property type="entry name" value="ACTIVATOR OF BASAL TRANSCRIPTION 1"/>
    <property type="match status" value="1"/>
</dbReference>
<dbReference type="PANTHER" id="PTHR12311:SF7">
    <property type="entry name" value="ACTIVATOR OF BASAL TRANSCRIPTION 1"/>
    <property type="match status" value="1"/>
</dbReference>
<dbReference type="SUPFAM" id="SSF54928">
    <property type="entry name" value="RNA-binding domain, RBD"/>
    <property type="match status" value="1"/>
</dbReference>
<protein>
    <recommendedName>
        <fullName>Pre-rRNA-processing protein ESF2</fullName>
    </recommendedName>
    <alternativeName>
        <fullName>18S rRNA factor 2</fullName>
    </alternativeName>
</protein>
<feature type="chain" id="PRO_0000285367" description="Pre-rRNA-processing protein ESF2">
    <location>
        <begin position="1"/>
        <end position="309"/>
    </location>
</feature>
<feature type="domain" description="RRM">
    <location>
        <begin position="114"/>
        <end position="204"/>
    </location>
</feature>
<feature type="region of interest" description="Disordered" evidence="2">
    <location>
        <begin position="1"/>
        <end position="98"/>
    </location>
</feature>
<feature type="region of interest" description="Disordered" evidence="2">
    <location>
        <begin position="257"/>
        <end position="309"/>
    </location>
</feature>
<feature type="compositionally biased region" description="Acidic residues" evidence="2">
    <location>
        <begin position="9"/>
        <end position="19"/>
    </location>
</feature>
<feature type="compositionally biased region" description="Acidic residues" evidence="2">
    <location>
        <begin position="38"/>
        <end position="51"/>
    </location>
</feature>
<feature type="compositionally biased region" description="Polar residues" evidence="2">
    <location>
        <begin position="68"/>
        <end position="80"/>
    </location>
</feature>
<feature type="compositionally biased region" description="Basic and acidic residues" evidence="2">
    <location>
        <begin position="88"/>
        <end position="98"/>
    </location>
</feature>
<feature type="compositionally biased region" description="Basic and acidic residues" evidence="2">
    <location>
        <begin position="265"/>
        <end position="275"/>
    </location>
</feature>